<gene>
    <name evidence="1" type="primary">atpE</name>
    <name type="ordered locus">RP022</name>
</gene>
<sequence length="74" mass="7686">MDIVSLKFIGIGFMAIGMYGAALGVSNIFSSLLSAIARNPSAAENLQRMALIGAGLAEAMGLFSFVIAMLLIFS</sequence>
<dbReference type="EMBL" id="AJ235270">
    <property type="protein sequence ID" value="CAA14493.1"/>
    <property type="molecule type" value="Genomic_DNA"/>
</dbReference>
<dbReference type="PIR" id="F71709">
    <property type="entry name" value="F71709"/>
</dbReference>
<dbReference type="RefSeq" id="NP_220416.1">
    <property type="nucleotide sequence ID" value="NC_000963.1"/>
</dbReference>
<dbReference type="RefSeq" id="WP_004596668.1">
    <property type="nucleotide sequence ID" value="NC_000963.1"/>
</dbReference>
<dbReference type="SMR" id="Q9ZEC2"/>
<dbReference type="STRING" id="272947.gene:17555105"/>
<dbReference type="EnsemblBacteria" id="CAA14493">
    <property type="protein sequence ID" value="CAA14493"/>
    <property type="gene ID" value="CAA14493"/>
</dbReference>
<dbReference type="KEGG" id="rpr:RP022"/>
<dbReference type="PATRIC" id="fig|272947.5.peg.22"/>
<dbReference type="eggNOG" id="COG0636">
    <property type="taxonomic scope" value="Bacteria"/>
</dbReference>
<dbReference type="HOGENOM" id="CLU_148047_4_0_5"/>
<dbReference type="OrthoDB" id="9811093at2"/>
<dbReference type="Proteomes" id="UP000002480">
    <property type="component" value="Chromosome"/>
</dbReference>
<dbReference type="GO" id="GO:0005886">
    <property type="term" value="C:plasma membrane"/>
    <property type="evidence" value="ECO:0007669"/>
    <property type="project" value="UniProtKB-SubCell"/>
</dbReference>
<dbReference type="GO" id="GO:0045259">
    <property type="term" value="C:proton-transporting ATP synthase complex"/>
    <property type="evidence" value="ECO:0007669"/>
    <property type="project" value="UniProtKB-KW"/>
</dbReference>
<dbReference type="GO" id="GO:0033177">
    <property type="term" value="C:proton-transporting two-sector ATPase complex, proton-transporting domain"/>
    <property type="evidence" value="ECO:0007669"/>
    <property type="project" value="InterPro"/>
</dbReference>
<dbReference type="GO" id="GO:0008289">
    <property type="term" value="F:lipid binding"/>
    <property type="evidence" value="ECO:0007669"/>
    <property type="project" value="UniProtKB-KW"/>
</dbReference>
<dbReference type="GO" id="GO:0046933">
    <property type="term" value="F:proton-transporting ATP synthase activity, rotational mechanism"/>
    <property type="evidence" value="ECO:0007669"/>
    <property type="project" value="UniProtKB-UniRule"/>
</dbReference>
<dbReference type="CDD" id="cd18182">
    <property type="entry name" value="ATP-synt_Fo_c_ATP5G3"/>
    <property type="match status" value="1"/>
</dbReference>
<dbReference type="Gene3D" id="1.20.20.10">
    <property type="entry name" value="F1F0 ATP synthase subunit C"/>
    <property type="match status" value="1"/>
</dbReference>
<dbReference type="HAMAP" id="MF_01396">
    <property type="entry name" value="ATP_synth_c_bact"/>
    <property type="match status" value="1"/>
</dbReference>
<dbReference type="InterPro" id="IPR000454">
    <property type="entry name" value="ATP_synth_F0_csu"/>
</dbReference>
<dbReference type="InterPro" id="IPR020537">
    <property type="entry name" value="ATP_synth_F0_csu_DDCD_BS"/>
</dbReference>
<dbReference type="InterPro" id="IPR038662">
    <property type="entry name" value="ATP_synth_F0_csu_sf"/>
</dbReference>
<dbReference type="InterPro" id="IPR002379">
    <property type="entry name" value="ATPase_proteolipid_c-like_dom"/>
</dbReference>
<dbReference type="InterPro" id="IPR035921">
    <property type="entry name" value="F/V-ATP_Csub_sf"/>
</dbReference>
<dbReference type="NCBIfam" id="NF005733">
    <property type="entry name" value="PRK07558.1"/>
    <property type="match status" value="1"/>
</dbReference>
<dbReference type="PANTHER" id="PTHR10031">
    <property type="entry name" value="ATP SYNTHASE LIPID-BINDING PROTEIN, MITOCHONDRIAL"/>
    <property type="match status" value="1"/>
</dbReference>
<dbReference type="PANTHER" id="PTHR10031:SF0">
    <property type="entry name" value="ATPASE PROTEIN 9"/>
    <property type="match status" value="1"/>
</dbReference>
<dbReference type="Pfam" id="PF00137">
    <property type="entry name" value="ATP-synt_C"/>
    <property type="match status" value="1"/>
</dbReference>
<dbReference type="PRINTS" id="PR00124">
    <property type="entry name" value="ATPASEC"/>
</dbReference>
<dbReference type="SUPFAM" id="SSF81333">
    <property type="entry name" value="F1F0 ATP synthase subunit C"/>
    <property type="match status" value="1"/>
</dbReference>
<dbReference type="PROSITE" id="PS00605">
    <property type="entry name" value="ATPASE_C"/>
    <property type="match status" value="1"/>
</dbReference>
<keyword id="KW-0066">ATP synthesis</keyword>
<keyword id="KW-0997">Cell inner membrane</keyword>
<keyword id="KW-1003">Cell membrane</keyword>
<keyword id="KW-0138">CF(0)</keyword>
<keyword id="KW-0375">Hydrogen ion transport</keyword>
<keyword id="KW-0406">Ion transport</keyword>
<keyword id="KW-0446">Lipid-binding</keyword>
<keyword id="KW-0472">Membrane</keyword>
<keyword id="KW-1185">Reference proteome</keyword>
<keyword id="KW-0812">Transmembrane</keyword>
<keyword id="KW-1133">Transmembrane helix</keyword>
<keyword id="KW-0813">Transport</keyword>
<feature type="chain" id="PRO_0000112161" description="ATP synthase subunit c">
    <location>
        <begin position="1"/>
        <end position="74"/>
    </location>
</feature>
<feature type="transmembrane region" description="Helical" evidence="1">
    <location>
        <begin position="8"/>
        <end position="28"/>
    </location>
</feature>
<feature type="transmembrane region" description="Helical" evidence="1">
    <location>
        <begin position="52"/>
        <end position="72"/>
    </location>
</feature>
<feature type="site" description="Reversibly protonated during proton transport" evidence="1">
    <location>
        <position position="58"/>
    </location>
</feature>
<proteinExistence type="inferred from homology"/>
<name>ATPL_RICPR</name>
<evidence type="ECO:0000255" key="1">
    <source>
        <dbReference type="HAMAP-Rule" id="MF_01396"/>
    </source>
</evidence>
<protein>
    <recommendedName>
        <fullName evidence="1">ATP synthase subunit c</fullName>
    </recommendedName>
    <alternativeName>
        <fullName evidence="1">ATP synthase F(0) sector subunit c</fullName>
    </alternativeName>
    <alternativeName>
        <fullName evidence="1">F-type ATPase subunit c</fullName>
        <shortName evidence="1">F-ATPase subunit c</shortName>
    </alternativeName>
    <alternativeName>
        <fullName evidence="1">Lipid-binding protein</fullName>
    </alternativeName>
</protein>
<accession>Q9ZEC2</accession>
<organism>
    <name type="scientific">Rickettsia prowazekii (strain Madrid E)</name>
    <dbReference type="NCBI Taxonomy" id="272947"/>
    <lineage>
        <taxon>Bacteria</taxon>
        <taxon>Pseudomonadati</taxon>
        <taxon>Pseudomonadota</taxon>
        <taxon>Alphaproteobacteria</taxon>
        <taxon>Rickettsiales</taxon>
        <taxon>Rickettsiaceae</taxon>
        <taxon>Rickettsieae</taxon>
        <taxon>Rickettsia</taxon>
        <taxon>typhus group</taxon>
    </lineage>
</organism>
<comment type="function">
    <text evidence="1">F(1)F(0) ATP synthase produces ATP from ADP in the presence of a proton or sodium gradient. F-type ATPases consist of two structural domains, F(1) containing the extramembraneous catalytic core and F(0) containing the membrane proton channel, linked together by a central stalk and a peripheral stalk. During catalysis, ATP synthesis in the catalytic domain of F(1) is coupled via a rotary mechanism of the central stalk subunits to proton translocation.</text>
</comment>
<comment type="function">
    <text evidence="1">Key component of the F(0) channel; it plays a direct role in translocation across the membrane. A homomeric c-ring of between 10-14 subunits forms the central stalk rotor element with the F(1) delta and epsilon subunits.</text>
</comment>
<comment type="subunit">
    <text evidence="1">F-type ATPases have 2 components, F(1) - the catalytic core - and F(0) - the membrane proton channel. F(1) has five subunits: alpha(3), beta(3), gamma(1), delta(1), epsilon(1). F(0) has three main subunits: a(1), b(2) and c(10-14). The alpha and beta chains form an alternating ring which encloses part of the gamma chain. F(1) is attached to F(0) by a central stalk formed by the gamma and epsilon chains, while a peripheral stalk is formed by the delta and b chains.</text>
</comment>
<comment type="subcellular location">
    <subcellularLocation>
        <location evidence="1">Cell inner membrane</location>
        <topology evidence="1">Multi-pass membrane protein</topology>
    </subcellularLocation>
</comment>
<comment type="similarity">
    <text evidence="1">Belongs to the ATPase C chain family.</text>
</comment>
<reference key="1">
    <citation type="journal article" date="1998" name="Nature">
        <title>The genome sequence of Rickettsia prowazekii and the origin of mitochondria.</title>
        <authorList>
            <person name="Andersson S.G.E."/>
            <person name="Zomorodipour A."/>
            <person name="Andersson J.O."/>
            <person name="Sicheritz-Ponten T."/>
            <person name="Alsmark U.C.M."/>
            <person name="Podowski R.M."/>
            <person name="Naeslund A.K."/>
            <person name="Eriksson A.-S."/>
            <person name="Winkler H.H."/>
            <person name="Kurland C.G."/>
        </authorList>
    </citation>
    <scope>NUCLEOTIDE SEQUENCE [LARGE SCALE GENOMIC DNA]</scope>
    <source>
        <strain>Madrid E</strain>
    </source>
</reference>